<accession>Q06770</accession>
<keyword id="KW-0325">Glycoprotein</keyword>
<keyword id="KW-0446">Lipid-binding</keyword>
<keyword id="KW-1185">Reference proteome</keyword>
<keyword id="KW-0964">Secreted</keyword>
<keyword id="KW-0732">Signal</keyword>
<keyword id="KW-0754">Steroid-binding</keyword>
<keyword id="KW-0813">Transport</keyword>
<reference key="1">
    <citation type="journal article" date="1993" name="Endocrinology">
        <title>Spatial and temporal distribution of corticosteroid-binding globulin and its messenger ribonucleic acid in embryonic and fetal mice.</title>
        <authorList>
            <person name="Scrocchi L.A."/>
            <person name="Orava M."/>
            <person name="Smith C.L."/>
            <person name="Han V.K.M."/>
            <person name="Hammond G.L."/>
        </authorList>
    </citation>
    <scope>NUCLEOTIDE SEQUENCE [MRNA]</scope>
</reference>
<reference key="2">
    <citation type="journal article" date="2006" name="J. Proteome Res.">
        <title>Proteome-wide characterization of N-glycosylation events by diagonal chromatography.</title>
        <authorList>
            <person name="Ghesquiere B."/>
            <person name="Van Damme J."/>
            <person name="Martens L."/>
            <person name="Vandekerckhove J."/>
            <person name="Gevaert K."/>
        </authorList>
    </citation>
    <scope>GLYCOSYLATION [LARGE SCALE ANALYSIS] AT ASN-89; ASN-217 AND ASN-232</scope>
    <source>
        <strain>C57BL/6J</strain>
        <tissue>Plasma</tissue>
    </source>
</reference>
<reference key="3">
    <citation type="journal article" date="2007" name="J. Proteome Res.">
        <title>Enhanced analysis of the mouse plasma proteome using cysteine-containing tryptic glycopeptides.</title>
        <authorList>
            <person name="Bernhard O.K."/>
            <person name="Kapp E.A."/>
            <person name="Simpson R.J."/>
        </authorList>
    </citation>
    <scope>GLYCOSYLATION [LARGE SCALE ANALYSIS] AT ASN-89</scope>
    <source>
        <strain>C57BL/6J</strain>
        <tissue>Plasma</tissue>
    </source>
</reference>
<reference key="4">
    <citation type="journal article" date="2010" name="Cell">
        <title>A tissue-specific atlas of mouse protein phosphorylation and expression.</title>
        <authorList>
            <person name="Huttlin E.L."/>
            <person name="Jedrychowski M.P."/>
            <person name="Elias J.E."/>
            <person name="Goswami T."/>
            <person name="Rad R."/>
            <person name="Beausoleil S.A."/>
            <person name="Villen J."/>
            <person name="Haas W."/>
            <person name="Sowa M.E."/>
            <person name="Gygi S.P."/>
        </authorList>
    </citation>
    <scope>IDENTIFICATION BY MASS SPECTROMETRY [LARGE SCALE ANALYSIS]</scope>
    <source>
        <tissue>Brown adipose tissue</tissue>
        <tissue>Heart</tissue>
        <tissue>Kidney</tissue>
        <tissue>Liver</tissue>
        <tissue>Lung</tissue>
        <tissue>Spleen</tissue>
        <tissue>Testis</tissue>
    </source>
</reference>
<protein>
    <recommendedName>
        <fullName>Corticosteroid-binding globulin</fullName>
        <shortName>CBG</shortName>
    </recommendedName>
    <alternativeName>
        <fullName>Serpin A6</fullName>
    </alternativeName>
    <alternativeName>
        <fullName>Transcortin</fullName>
    </alternativeName>
</protein>
<dbReference type="EMBL" id="X70533">
    <property type="protein sequence ID" value="CAA49934.1"/>
    <property type="molecule type" value="mRNA"/>
</dbReference>
<dbReference type="CCDS" id="CCDS26135.1"/>
<dbReference type="PIR" id="S33415">
    <property type="entry name" value="S33415"/>
</dbReference>
<dbReference type="RefSeq" id="NP_031644.1">
    <property type="nucleotide sequence ID" value="NM_007618.3"/>
</dbReference>
<dbReference type="SMR" id="Q06770"/>
<dbReference type="FunCoup" id="Q06770">
    <property type="interactions" value="268"/>
</dbReference>
<dbReference type="STRING" id="10090.ENSMUSP00000044033"/>
<dbReference type="MEROPS" id="I04.954"/>
<dbReference type="GlyConnect" id="2236">
    <property type="glycosylation" value="1 N-Linked glycan (1 site)"/>
</dbReference>
<dbReference type="GlyCosmos" id="Q06770">
    <property type="glycosylation" value="6 sites, 1 glycan"/>
</dbReference>
<dbReference type="GlyGen" id="Q06770">
    <property type="glycosylation" value="7 sites, 1 N-linked glycan (1 site), 1 O-linked glycan (1 site)"/>
</dbReference>
<dbReference type="iPTMnet" id="Q06770"/>
<dbReference type="PhosphoSitePlus" id="Q06770"/>
<dbReference type="CPTAC" id="non-CPTAC-3374"/>
<dbReference type="CPTAC" id="non-CPTAC-5584"/>
<dbReference type="jPOST" id="Q06770"/>
<dbReference type="PaxDb" id="10090-ENSMUSP00000044033"/>
<dbReference type="PeptideAtlas" id="Q06770"/>
<dbReference type="ProteomicsDB" id="283689"/>
<dbReference type="Antibodypedia" id="59">
    <property type="antibodies" value="513 antibodies from 40 providers"/>
</dbReference>
<dbReference type="DNASU" id="12401"/>
<dbReference type="Ensembl" id="ENSMUST00000044159.7">
    <property type="protein sequence ID" value="ENSMUSP00000044033.7"/>
    <property type="gene ID" value="ENSMUSG00000060807.8"/>
</dbReference>
<dbReference type="GeneID" id="12401"/>
<dbReference type="KEGG" id="mmu:12401"/>
<dbReference type="UCSC" id="uc007owa.1">
    <property type="organism name" value="mouse"/>
</dbReference>
<dbReference type="AGR" id="MGI:88278"/>
<dbReference type="CTD" id="866"/>
<dbReference type="MGI" id="MGI:88278">
    <property type="gene designation" value="Serpina6"/>
</dbReference>
<dbReference type="VEuPathDB" id="HostDB:ENSMUSG00000060807"/>
<dbReference type="eggNOG" id="KOG2392">
    <property type="taxonomic scope" value="Eukaryota"/>
</dbReference>
<dbReference type="GeneTree" id="ENSGT00940000161611"/>
<dbReference type="HOGENOM" id="CLU_023330_2_1_1"/>
<dbReference type="InParanoid" id="Q06770"/>
<dbReference type="OMA" id="HDSELPC"/>
<dbReference type="OrthoDB" id="671595at2759"/>
<dbReference type="PhylomeDB" id="Q06770"/>
<dbReference type="TreeFam" id="TF343201"/>
<dbReference type="Reactome" id="R-MMU-194002">
    <property type="pathway name" value="Glucocorticoid biosynthesis"/>
</dbReference>
<dbReference type="Reactome" id="R-MMU-9757110">
    <property type="pathway name" value="Prednisone ADME"/>
</dbReference>
<dbReference type="BioGRID-ORCS" id="12401">
    <property type="hits" value="4 hits in 79 CRISPR screens"/>
</dbReference>
<dbReference type="ChiTaRS" id="Serpina6">
    <property type="organism name" value="mouse"/>
</dbReference>
<dbReference type="PRO" id="PR:Q06770"/>
<dbReference type="Proteomes" id="UP000000589">
    <property type="component" value="Chromosome 12"/>
</dbReference>
<dbReference type="RNAct" id="Q06770">
    <property type="molecule type" value="protein"/>
</dbReference>
<dbReference type="Bgee" id="ENSMUSG00000060807">
    <property type="expression patterns" value="Expressed in dorsal pancreas and 52 other cell types or tissues"/>
</dbReference>
<dbReference type="ExpressionAtlas" id="Q06770">
    <property type="expression patterns" value="baseline and differential"/>
</dbReference>
<dbReference type="GO" id="GO:0005615">
    <property type="term" value="C:extracellular space"/>
    <property type="evidence" value="ECO:0000315"/>
    <property type="project" value="MGI"/>
</dbReference>
<dbReference type="GO" id="GO:0004867">
    <property type="term" value="F:serine-type endopeptidase inhibitor activity"/>
    <property type="evidence" value="ECO:0007669"/>
    <property type="project" value="InterPro"/>
</dbReference>
<dbReference type="GO" id="GO:0005496">
    <property type="term" value="F:steroid binding"/>
    <property type="evidence" value="ECO:0000314"/>
    <property type="project" value="MGI"/>
</dbReference>
<dbReference type="GO" id="GO:0008211">
    <property type="term" value="P:glucocorticoid metabolic process"/>
    <property type="evidence" value="ECO:0000315"/>
    <property type="project" value="MGI"/>
</dbReference>
<dbReference type="CDD" id="cd19554">
    <property type="entry name" value="serpinA6_CBG"/>
    <property type="match status" value="1"/>
</dbReference>
<dbReference type="FunFam" id="3.30.497.10:FF:000001">
    <property type="entry name" value="Serine protease inhibitor"/>
    <property type="match status" value="1"/>
</dbReference>
<dbReference type="FunFam" id="2.30.39.10:FF:000002">
    <property type="entry name" value="Serpin family D member 1"/>
    <property type="match status" value="1"/>
</dbReference>
<dbReference type="Gene3D" id="2.30.39.10">
    <property type="entry name" value="Alpha-1-antitrypsin, domain 1"/>
    <property type="match status" value="1"/>
</dbReference>
<dbReference type="Gene3D" id="3.30.497.10">
    <property type="entry name" value="Antithrombin, subunit I, domain 2"/>
    <property type="match status" value="1"/>
</dbReference>
<dbReference type="InterPro" id="IPR023795">
    <property type="entry name" value="Serpin_CS"/>
</dbReference>
<dbReference type="InterPro" id="IPR023796">
    <property type="entry name" value="Serpin_dom"/>
</dbReference>
<dbReference type="InterPro" id="IPR000215">
    <property type="entry name" value="Serpin_fam"/>
</dbReference>
<dbReference type="InterPro" id="IPR036186">
    <property type="entry name" value="Serpin_sf"/>
</dbReference>
<dbReference type="InterPro" id="IPR042178">
    <property type="entry name" value="Serpin_sf_1"/>
</dbReference>
<dbReference type="InterPro" id="IPR042185">
    <property type="entry name" value="Serpin_sf_2"/>
</dbReference>
<dbReference type="PANTHER" id="PTHR11461:SF34">
    <property type="entry name" value="CORTICOSTEROID-BINDING GLOBULIN"/>
    <property type="match status" value="1"/>
</dbReference>
<dbReference type="PANTHER" id="PTHR11461">
    <property type="entry name" value="SERINE PROTEASE INHIBITOR, SERPIN"/>
    <property type="match status" value="1"/>
</dbReference>
<dbReference type="Pfam" id="PF00079">
    <property type="entry name" value="Serpin"/>
    <property type="match status" value="1"/>
</dbReference>
<dbReference type="PRINTS" id="PR00780">
    <property type="entry name" value="LEUSERPINII"/>
</dbReference>
<dbReference type="SMART" id="SM00093">
    <property type="entry name" value="SERPIN"/>
    <property type="match status" value="1"/>
</dbReference>
<dbReference type="SUPFAM" id="SSF56574">
    <property type="entry name" value="Serpins"/>
    <property type="match status" value="1"/>
</dbReference>
<dbReference type="PROSITE" id="PS00284">
    <property type="entry name" value="SERPIN"/>
    <property type="match status" value="1"/>
</dbReference>
<name>CBG_MOUSE</name>
<sequence length="397" mass="44769">MSLALYTCLFWLCTSGLWTTQAVTDEDSSSHRDLAPTNVDFAFNLYKRLVALNSDKNTLISPVSISMALAMLSLSTRGSTQYLENLGFNMSKMSEAEIHQGFQYLNSLLQQSDTGLEMNMGNVMFLLQNLKLKDSFLADTKHYYESEALTIPSKDWTKAGEQINNHVKNKTQGKIEHVVSDLDSSATLILINYIFLKGIWKLPFSPENTREEDFYVNETSTVKVPMMVQSGNISYFRDSAIPCQMVQMNYVGNGTTFIILPDQGQMDTVVAALNRDTIDRWGKLMIPRQMNLYIPKFSMSDTYDLQDVLADVGIKDLFTNQSDFADTTKDTPLTLTVLHKAMLQLDEGNVLPAATNGPPVHLPSESFTLKYNRPFIFLAFDKYTWSSLMMSQVMNPA</sequence>
<feature type="signal peptide" evidence="1">
    <location>
        <begin position="1"/>
        <end position="22"/>
    </location>
</feature>
<feature type="chain" id="PRO_0000032431" description="Corticosteroid-binding globulin">
    <location>
        <begin position="23"/>
        <end position="397"/>
    </location>
</feature>
<feature type="binding site" evidence="1">
    <location>
        <position position="247"/>
    </location>
    <ligand>
        <name>cortisol</name>
        <dbReference type="ChEBI" id="CHEBI:17650"/>
    </ligand>
</feature>
<feature type="binding site" evidence="1">
    <location>
        <position position="279"/>
    </location>
    <ligand>
        <name>cortisol</name>
        <dbReference type="ChEBI" id="CHEBI:17650"/>
    </ligand>
</feature>
<feature type="binding site" evidence="1">
    <location>
        <position position="385"/>
    </location>
    <ligand>
        <name>cortisol</name>
        <dbReference type="ChEBI" id="CHEBI:17650"/>
    </ligand>
</feature>
<feature type="site" description="Conserved cysteine within steroid binding domain">
    <location>
        <position position="243"/>
    </location>
</feature>
<feature type="glycosylation site" description="N-linked (GlcNAc...) asparagine" evidence="3 4">
    <location>
        <position position="89"/>
    </location>
</feature>
<feature type="glycosylation site" description="N-linked (GlcNAc...) asparagine" evidence="2">
    <location>
        <position position="169"/>
    </location>
</feature>
<feature type="glycosylation site" description="N-linked (GlcNAc...) asparagine" evidence="3">
    <location>
        <position position="217"/>
    </location>
</feature>
<feature type="glycosylation site" description="N-linked (GlcNAc...) asparagine" evidence="3">
    <location>
        <position position="232"/>
    </location>
</feature>
<feature type="glycosylation site" description="N-linked (GlcNAc...) asparagine" evidence="2">
    <location>
        <position position="253"/>
    </location>
</feature>
<feature type="glycosylation site" description="N-linked (GlcNAc...) asparagine" evidence="2">
    <location>
        <position position="320"/>
    </location>
</feature>
<evidence type="ECO:0000250" key="1"/>
<evidence type="ECO:0000255" key="2"/>
<evidence type="ECO:0000269" key="3">
    <source>
    </source>
</evidence>
<evidence type="ECO:0000269" key="4">
    <source>
    </source>
</evidence>
<evidence type="ECO:0000305" key="5"/>
<proteinExistence type="evidence at protein level"/>
<organism>
    <name type="scientific">Mus musculus</name>
    <name type="common">Mouse</name>
    <dbReference type="NCBI Taxonomy" id="10090"/>
    <lineage>
        <taxon>Eukaryota</taxon>
        <taxon>Metazoa</taxon>
        <taxon>Chordata</taxon>
        <taxon>Craniata</taxon>
        <taxon>Vertebrata</taxon>
        <taxon>Euteleostomi</taxon>
        <taxon>Mammalia</taxon>
        <taxon>Eutheria</taxon>
        <taxon>Euarchontoglires</taxon>
        <taxon>Glires</taxon>
        <taxon>Rodentia</taxon>
        <taxon>Myomorpha</taxon>
        <taxon>Muroidea</taxon>
        <taxon>Muridae</taxon>
        <taxon>Murinae</taxon>
        <taxon>Mus</taxon>
        <taxon>Mus</taxon>
    </lineage>
</organism>
<comment type="function">
    <text>Major transport protein for glucocorticoids and progestins in the blood of almost all vertebrate species.</text>
</comment>
<comment type="subcellular location">
    <subcellularLocation>
        <location>Secreted</location>
    </subcellularLocation>
</comment>
<comment type="tissue specificity">
    <text>Expressed by the liver; secreted in plasma.</text>
</comment>
<comment type="domain">
    <text evidence="1">Proteolytic cleavage leads to an important conformation change. This reduces the affinity for steroids (By similarity).</text>
</comment>
<comment type="similarity">
    <text evidence="5">Belongs to the serpin family.</text>
</comment>
<gene>
    <name type="primary">Serpina6</name>
    <name type="synonym">Cbg</name>
</gene>